<comment type="function">
    <text evidence="1">ATP-binding RNA helicase involved in ribosome assembly.</text>
</comment>
<comment type="catalytic activity">
    <reaction>
        <text>ATP + H2O = ADP + phosphate + H(+)</text>
        <dbReference type="Rhea" id="RHEA:13065"/>
        <dbReference type="ChEBI" id="CHEBI:15377"/>
        <dbReference type="ChEBI" id="CHEBI:15378"/>
        <dbReference type="ChEBI" id="CHEBI:30616"/>
        <dbReference type="ChEBI" id="CHEBI:43474"/>
        <dbReference type="ChEBI" id="CHEBI:456216"/>
        <dbReference type="EC" id="3.6.4.13"/>
    </reaction>
</comment>
<comment type="subunit">
    <text evidence="1">Associates with pre-ribosomal particles.</text>
</comment>
<comment type="subcellular location">
    <subcellularLocation>
        <location evidence="1">Nucleus</location>
        <location evidence="1">Nucleolus</location>
    </subcellularLocation>
</comment>
<comment type="domain">
    <text>The Q motif is unique to and characteristic of the DEAD box family of RNA helicases and controls ATP binding and hydrolysis.</text>
</comment>
<comment type="similarity">
    <text evidence="5">Belongs to the DEAD box helicase family. DDX27/DRS1 subfamily.</text>
</comment>
<feature type="chain" id="PRO_0000310214" description="ATP-dependent RNA helicase drs1">
    <location>
        <begin position="1"/>
        <end position="801"/>
    </location>
</feature>
<feature type="domain" description="Helicase ATP-binding" evidence="2">
    <location>
        <begin position="299"/>
        <end position="473"/>
    </location>
</feature>
<feature type="domain" description="Helicase C-terminal" evidence="3">
    <location>
        <begin position="503"/>
        <end position="682"/>
    </location>
</feature>
<feature type="region of interest" description="Disordered" evidence="4">
    <location>
        <begin position="1"/>
        <end position="79"/>
    </location>
</feature>
<feature type="region of interest" description="Disordered" evidence="4">
    <location>
        <begin position="97"/>
        <end position="120"/>
    </location>
</feature>
<feature type="region of interest" description="Disordered" evidence="4">
    <location>
        <begin position="132"/>
        <end position="244"/>
    </location>
</feature>
<feature type="region of interest" description="Disordered" evidence="4">
    <location>
        <begin position="726"/>
        <end position="801"/>
    </location>
</feature>
<feature type="short sequence motif" description="Q motif">
    <location>
        <begin position="268"/>
        <end position="296"/>
    </location>
</feature>
<feature type="short sequence motif" description="DEAD box">
    <location>
        <begin position="421"/>
        <end position="424"/>
    </location>
</feature>
<feature type="compositionally biased region" description="Basic and acidic residues" evidence="4">
    <location>
        <begin position="1"/>
        <end position="10"/>
    </location>
</feature>
<feature type="compositionally biased region" description="Acidic residues" evidence="4">
    <location>
        <begin position="18"/>
        <end position="32"/>
    </location>
</feature>
<feature type="compositionally biased region" description="Acidic residues" evidence="4">
    <location>
        <begin position="156"/>
        <end position="179"/>
    </location>
</feature>
<feature type="compositionally biased region" description="Acidic residues" evidence="4">
    <location>
        <begin position="193"/>
        <end position="214"/>
    </location>
</feature>
<feature type="compositionally biased region" description="Acidic residues" evidence="4">
    <location>
        <begin position="227"/>
        <end position="243"/>
    </location>
</feature>
<feature type="compositionally biased region" description="Basic and acidic residues" evidence="4">
    <location>
        <begin position="735"/>
        <end position="770"/>
    </location>
</feature>
<feature type="compositionally biased region" description="Basic residues" evidence="4">
    <location>
        <begin position="785"/>
        <end position="801"/>
    </location>
</feature>
<feature type="binding site" evidence="2">
    <location>
        <begin position="312"/>
        <end position="319"/>
    </location>
    <ligand>
        <name>ATP</name>
        <dbReference type="ChEBI" id="CHEBI:30616"/>
    </ligand>
</feature>
<organism>
    <name type="scientific">Sclerotinia sclerotiorum (strain ATCC 18683 / 1980 / Ss-1)</name>
    <name type="common">White mold</name>
    <name type="synonym">Whetzelinia sclerotiorum</name>
    <dbReference type="NCBI Taxonomy" id="665079"/>
    <lineage>
        <taxon>Eukaryota</taxon>
        <taxon>Fungi</taxon>
        <taxon>Dikarya</taxon>
        <taxon>Ascomycota</taxon>
        <taxon>Pezizomycotina</taxon>
        <taxon>Leotiomycetes</taxon>
        <taxon>Helotiales</taxon>
        <taxon>Sclerotiniaceae</taxon>
        <taxon>Sclerotinia</taxon>
    </lineage>
</organism>
<dbReference type="EC" id="3.6.4.13"/>
<dbReference type="EMBL" id="CH476641">
    <property type="protein sequence ID" value="EDN97686.1"/>
    <property type="molecule type" value="Genomic_DNA"/>
</dbReference>
<dbReference type="RefSeq" id="XP_001586553.1">
    <property type="nucleotide sequence ID" value="XM_001586503.1"/>
</dbReference>
<dbReference type="SMR" id="A7F4L5"/>
<dbReference type="FunCoup" id="A7F4L5">
    <property type="interactions" value="830"/>
</dbReference>
<dbReference type="STRING" id="665079.A7F4L5"/>
<dbReference type="EnsemblFungi" id="EDN97686">
    <property type="protein sequence ID" value="EDN97686"/>
    <property type="gene ID" value="SS1G_12540"/>
</dbReference>
<dbReference type="GeneID" id="5482731"/>
<dbReference type="KEGG" id="ssl:SS1G_12540"/>
<dbReference type="VEuPathDB" id="FungiDB:sscle_06g053970"/>
<dbReference type="eggNOG" id="KOG0338">
    <property type="taxonomic scope" value="Eukaryota"/>
</dbReference>
<dbReference type="HOGENOM" id="CLU_003041_3_1_1"/>
<dbReference type="InParanoid" id="A7F4L5"/>
<dbReference type="OMA" id="MIDPPKQ"/>
<dbReference type="OrthoDB" id="10259843at2759"/>
<dbReference type="Proteomes" id="UP000001312">
    <property type="component" value="Unassembled WGS sequence"/>
</dbReference>
<dbReference type="GO" id="GO:0005730">
    <property type="term" value="C:nucleolus"/>
    <property type="evidence" value="ECO:0000318"/>
    <property type="project" value="GO_Central"/>
</dbReference>
<dbReference type="GO" id="GO:0030687">
    <property type="term" value="C:preribosome, large subunit precursor"/>
    <property type="evidence" value="ECO:0007669"/>
    <property type="project" value="EnsemblFungi"/>
</dbReference>
<dbReference type="GO" id="GO:0005524">
    <property type="term" value="F:ATP binding"/>
    <property type="evidence" value="ECO:0007669"/>
    <property type="project" value="UniProtKB-KW"/>
</dbReference>
<dbReference type="GO" id="GO:0016887">
    <property type="term" value="F:ATP hydrolysis activity"/>
    <property type="evidence" value="ECO:0007669"/>
    <property type="project" value="RHEA"/>
</dbReference>
<dbReference type="GO" id="GO:0003723">
    <property type="term" value="F:RNA binding"/>
    <property type="evidence" value="ECO:0007669"/>
    <property type="project" value="UniProtKB-KW"/>
</dbReference>
<dbReference type="GO" id="GO:0003724">
    <property type="term" value="F:RNA helicase activity"/>
    <property type="evidence" value="ECO:0007669"/>
    <property type="project" value="UniProtKB-EC"/>
</dbReference>
<dbReference type="GO" id="GO:0000027">
    <property type="term" value="P:ribosomal large subunit assembly"/>
    <property type="evidence" value="ECO:0007669"/>
    <property type="project" value="EnsemblFungi"/>
</dbReference>
<dbReference type="GO" id="GO:0006364">
    <property type="term" value="P:rRNA processing"/>
    <property type="evidence" value="ECO:0007669"/>
    <property type="project" value="EnsemblFungi"/>
</dbReference>
<dbReference type="CDD" id="cd17947">
    <property type="entry name" value="DEADc_DDX27"/>
    <property type="match status" value="1"/>
</dbReference>
<dbReference type="CDD" id="cd18787">
    <property type="entry name" value="SF2_C_DEAD"/>
    <property type="match status" value="1"/>
</dbReference>
<dbReference type="Gene3D" id="3.40.50.300">
    <property type="entry name" value="P-loop containing nucleotide triphosphate hydrolases"/>
    <property type="match status" value="2"/>
</dbReference>
<dbReference type="InterPro" id="IPR011545">
    <property type="entry name" value="DEAD/DEAH_box_helicase_dom"/>
</dbReference>
<dbReference type="InterPro" id="IPR050079">
    <property type="entry name" value="DEAD_box_RNA_helicase"/>
</dbReference>
<dbReference type="InterPro" id="IPR014001">
    <property type="entry name" value="Helicase_ATP-bd"/>
</dbReference>
<dbReference type="InterPro" id="IPR001650">
    <property type="entry name" value="Helicase_C-like"/>
</dbReference>
<dbReference type="InterPro" id="IPR027417">
    <property type="entry name" value="P-loop_NTPase"/>
</dbReference>
<dbReference type="InterPro" id="IPR000629">
    <property type="entry name" value="RNA-helicase_DEAD-box_CS"/>
</dbReference>
<dbReference type="InterPro" id="IPR014014">
    <property type="entry name" value="RNA_helicase_DEAD_Q_motif"/>
</dbReference>
<dbReference type="PANTHER" id="PTHR47959:SF1">
    <property type="entry name" value="ATP-DEPENDENT RNA HELICASE DBPA"/>
    <property type="match status" value="1"/>
</dbReference>
<dbReference type="PANTHER" id="PTHR47959">
    <property type="entry name" value="ATP-DEPENDENT RNA HELICASE RHLE-RELATED"/>
    <property type="match status" value="1"/>
</dbReference>
<dbReference type="Pfam" id="PF00270">
    <property type="entry name" value="DEAD"/>
    <property type="match status" value="1"/>
</dbReference>
<dbReference type="Pfam" id="PF00271">
    <property type="entry name" value="Helicase_C"/>
    <property type="match status" value="1"/>
</dbReference>
<dbReference type="SMART" id="SM00487">
    <property type="entry name" value="DEXDc"/>
    <property type="match status" value="1"/>
</dbReference>
<dbReference type="SMART" id="SM00490">
    <property type="entry name" value="HELICc"/>
    <property type="match status" value="1"/>
</dbReference>
<dbReference type="SUPFAM" id="SSF52540">
    <property type="entry name" value="P-loop containing nucleoside triphosphate hydrolases"/>
    <property type="match status" value="2"/>
</dbReference>
<dbReference type="PROSITE" id="PS00039">
    <property type="entry name" value="DEAD_ATP_HELICASE"/>
    <property type="match status" value="1"/>
</dbReference>
<dbReference type="PROSITE" id="PS51192">
    <property type="entry name" value="HELICASE_ATP_BIND_1"/>
    <property type="match status" value="1"/>
</dbReference>
<dbReference type="PROSITE" id="PS51194">
    <property type="entry name" value="HELICASE_CTER"/>
    <property type="match status" value="1"/>
</dbReference>
<dbReference type="PROSITE" id="PS51195">
    <property type="entry name" value="Q_MOTIF"/>
    <property type="match status" value="1"/>
</dbReference>
<name>DRS1_SCLS1</name>
<reference key="1">
    <citation type="journal article" date="2011" name="PLoS Genet.">
        <title>Genomic analysis of the necrotrophic fungal pathogens Sclerotinia sclerotiorum and Botrytis cinerea.</title>
        <authorList>
            <person name="Amselem J."/>
            <person name="Cuomo C.A."/>
            <person name="van Kan J.A.L."/>
            <person name="Viaud M."/>
            <person name="Benito E.P."/>
            <person name="Couloux A."/>
            <person name="Coutinho P.M."/>
            <person name="de Vries R.P."/>
            <person name="Dyer P.S."/>
            <person name="Fillinger S."/>
            <person name="Fournier E."/>
            <person name="Gout L."/>
            <person name="Hahn M."/>
            <person name="Kohn L."/>
            <person name="Lapalu N."/>
            <person name="Plummer K.M."/>
            <person name="Pradier J.-M."/>
            <person name="Quevillon E."/>
            <person name="Sharon A."/>
            <person name="Simon A."/>
            <person name="ten Have A."/>
            <person name="Tudzynski B."/>
            <person name="Tudzynski P."/>
            <person name="Wincker P."/>
            <person name="Andrew M."/>
            <person name="Anthouard V."/>
            <person name="Beever R.E."/>
            <person name="Beffa R."/>
            <person name="Benoit I."/>
            <person name="Bouzid O."/>
            <person name="Brault B."/>
            <person name="Chen Z."/>
            <person name="Choquer M."/>
            <person name="Collemare J."/>
            <person name="Cotton P."/>
            <person name="Danchin E.G."/>
            <person name="Da Silva C."/>
            <person name="Gautier A."/>
            <person name="Giraud C."/>
            <person name="Giraud T."/>
            <person name="Gonzalez C."/>
            <person name="Grossetete S."/>
            <person name="Gueldener U."/>
            <person name="Henrissat B."/>
            <person name="Howlett B.J."/>
            <person name="Kodira C."/>
            <person name="Kretschmer M."/>
            <person name="Lappartient A."/>
            <person name="Leroch M."/>
            <person name="Levis C."/>
            <person name="Mauceli E."/>
            <person name="Neuveglise C."/>
            <person name="Oeser B."/>
            <person name="Pearson M."/>
            <person name="Poulain J."/>
            <person name="Poussereau N."/>
            <person name="Quesneville H."/>
            <person name="Rascle C."/>
            <person name="Schumacher J."/>
            <person name="Segurens B."/>
            <person name="Sexton A."/>
            <person name="Silva E."/>
            <person name="Sirven C."/>
            <person name="Soanes D.M."/>
            <person name="Talbot N.J."/>
            <person name="Templeton M."/>
            <person name="Yandava C."/>
            <person name="Yarden O."/>
            <person name="Zeng Q."/>
            <person name="Rollins J.A."/>
            <person name="Lebrun M.-H."/>
            <person name="Dickman M."/>
        </authorList>
    </citation>
    <scope>NUCLEOTIDE SEQUENCE [LARGE SCALE GENOMIC DNA]</scope>
    <source>
        <strain>ATCC 18683 / 1980 / Ss-1</strain>
    </source>
</reference>
<evidence type="ECO:0000250" key="1"/>
<evidence type="ECO:0000255" key="2">
    <source>
        <dbReference type="PROSITE-ProRule" id="PRU00541"/>
    </source>
</evidence>
<evidence type="ECO:0000255" key="3">
    <source>
        <dbReference type="PROSITE-ProRule" id="PRU00542"/>
    </source>
</evidence>
<evidence type="ECO:0000256" key="4">
    <source>
        <dbReference type="SAM" id="MobiDB-lite"/>
    </source>
</evidence>
<evidence type="ECO:0000305" key="5"/>
<accession>A7F4L5</accession>
<protein>
    <recommendedName>
        <fullName>ATP-dependent RNA helicase drs1</fullName>
        <ecNumber>3.6.4.13</ecNumber>
    </recommendedName>
</protein>
<sequence>MAPKRNRDDDFVLTLSDNEGEDLTNVIEEELPLDPSSNKKRKRNDDIASTKKSKKSKKKSEDEDVEEEEIWGIKDADDGAMDSDFEFALEADGKGGADLEEFEGWGFDGAKKGLNGGDKKAVDIDEIIARRREKKKATGKKGEAEDEVIAEKEDVVASDEEQDAPEEMDFEDEDDEFMAEDGFGMGAGSAEESGAEEDSEASDNEGAEDDDSDNDSVASPAPHPDDAASEASDDDEDIDEDPEEAAKREAFFAPEEKPVKGAKPELNSTFQSMSLSRPILRGLATVGFTQPTPIQSKTIPVALLGKDVVGGAVTGSGKTAAFIVPVLERLLYRPKKVPTSRVAILMPTRELAIQCHAVATKLASHTDIKFCLAVGGLSLKVQEAELRLRPDVIIATPGRFIDHMRNSPSFTVDTLEILVLDEADRMLEAGFADELNEILTTIPKSRQTMLFSATMSSSVDNLIRVGLNRPVRLLVDSQKSTAGTLTQEFIRLRPGREGKRMGYLLYLCANVYTDRVIVFFRQKKEAHRARIIFGLSGLKATELHGSMSQEQRIKSVEAFRDGKASFLLATDLASRGLDIKGVDTVINYEAPQSHDIYLHRVGRTARAGRSGRACTIAAEPDRKVVKAAVKASRTQGAKVVSRVIEASEADSWSEKVDEMADEIEEILKEEKEDKILAQAEMEVRKGQNFMDHEAEIKGRPKRTWFESEKEKLAAKKLGMEELNGVVGGKKKGKLSNKDKKKLDDKGERLEGRVWKKGRQERDGKGVLAKEKGKKKVKGGKPAGLGKKKAMKPMRTGGAKRR</sequence>
<gene>
    <name type="primary">drs1</name>
    <name type="ORF">SS1G_12540</name>
</gene>
<keyword id="KW-0067">ATP-binding</keyword>
<keyword id="KW-0347">Helicase</keyword>
<keyword id="KW-0378">Hydrolase</keyword>
<keyword id="KW-0547">Nucleotide-binding</keyword>
<keyword id="KW-0539">Nucleus</keyword>
<keyword id="KW-1185">Reference proteome</keyword>
<keyword id="KW-0690">Ribosome biogenesis</keyword>
<keyword id="KW-0694">RNA-binding</keyword>
<proteinExistence type="inferred from homology"/>